<feature type="chain" id="PRO_0000344595" description="L-rhamnose mutarotase">
    <location>
        <begin position="1"/>
        <end position="105"/>
    </location>
</feature>
<feature type="active site" description="Proton donor" evidence="1">
    <location>
        <position position="23"/>
    </location>
</feature>
<feature type="binding site" evidence="1">
    <location>
        <position position="19"/>
    </location>
    <ligand>
        <name>substrate</name>
    </ligand>
</feature>
<feature type="binding site" evidence="1">
    <location>
        <position position="42"/>
    </location>
    <ligand>
        <name>substrate</name>
    </ligand>
</feature>
<feature type="binding site" evidence="1">
    <location>
        <begin position="77"/>
        <end position="78"/>
    </location>
    <ligand>
        <name>substrate</name>
    </ligand>
</feature>
<proteinExistence type="inferred from homology"/>
<comment type="function">
    <text evidence="1">Involved in the anomeric conversion of L-rhamnose.</text>
</comment>
<comment type="catalytic activity">
    <reaction evidence="1">
        <text>alpha-L-rhamnose = beta-L-rhamnose</text>
        <dbReference type="Rhea" id="RHEA:25584"/>
        <dbReference type="ChEBI" id="CHEBI:27586"/>
        <dbReference type="ChEBI" id="CHEBI:27907"/>
        <dbReference type="EC" id="5.1.3.32"/>
    </reaction>
</comment>
<comment type="pathway">
    <text evidence="1">Carbohydrate metabolism; L-rhamnose metabolism.</text>
</comment>
<comment type="subunit">
    <text evidence="1">Homodimer.</text>
</comment>
<comment type="subcellular location">
    <subcellularLocation>
        <location evidence="1">Cytoplasm</location>
    </subcellularLocation>
</comment>
<comment type="similarity">
    <text evidence="1">Belongs to the rhamnose mutarotase family.</text>
</comment>
<evidence type="ECO:0000255" key="1">
    <source>
        <dbReference type="HAMAP-Rule" id="MF_01663"/>
    </source>
</evidence>
<protein>
    <recommendedName>
        <fullName evidence="1">L-rhamnose mutarotase</fullName>
        <ecNumber evidence="1">5.1.3.32</ecNumber>
    </recommendedName>
    <alternativeName>
        <fullName evidence="1">Rhamnose 1-epimerase</fullName>
    </alternativeName>
    <alternativeName>
        <fullName evidence="1">Type-3 mutarotase</fullName>
    </alternativeName>
</protein>
<gene>
    <name evidence="1" type="primary">rhaM</name>
    <name type="ordered locus">mll5702</name>
</gene>
<sequence>MPEKYAFKMKLKPGMKAEYKKRHDEIWPSLVSLLKQAGVSDYSIHLDEETNILFGVLWRRDHHGMAELPKQPVMQRWWADMADIMETGPDNEPVAVPLETMFHMA</sequence>
<reference key="1">
    <citation type="journal article" date="2000" name="DNA Res.">
        <title>Complete genome structure of the nitrogen-fixing symbiotic bacterium Mesorhizobium loti.</title>
        <authorList>
            <person name="Kaneko T."/>
            <person name="Nakamura Y."/>
            <person name="Sato S."/>
            <person name="Asamizu E."/>
            <person name="Kato T."/>
            <person name="Sasamoto S."/>
            <person name="Watanabe A."/>
            <person name="Idesawa K."/>
            <person name="Ishikawa A."/>
            <person name="Kawashima K."/>
            <person name="Kimura T."/>
            <person name="Kishida Y."/>
            <person name="Kiyokawa C."/>
            <person name="Kohara M."/>
            <person name="Matsumoto M."/>
            <person name="Matsuno A."/>
            <person name="Mochizuki Y."/>
            <person name="Nakayama S."/>
            <person name="Nakazaki N."/>
            <person name="Shimpo S."/>
            <person name="Sugimoto M."/>
            <person name="Takeuchi C."/>
            <person name="Yamada M."/>
            <person name="Tabata S."/>
        </authorList>
    </citation>
    <scope>NUCLEOTIDE SEQUENCE [LARGE SCALE GENOMIC DNA]</scope>
    <source>
        <strain>LMG 29417 / CECT 9101 / MAFF 303099</strain>
    </source>
</reference>
<dbReference type="EC" id="5.1.3.32" evidence="1"/>
<dbReference type="EMBL" id="BA000012">
    <property type="protein sequence ID" value="BAB52100.1"/>
    <property type="molecule type" value="Genomic_DNA"/>
</dbReference>
<dbReference type="RefSeq" id="WP_010913438.1">
    <property type="nucleotide sequence ID" value="NC_002678.2"/>
</dbReference>
<dbReference type="SMR" id="Q98B72"/>
<dbReference type="KEGG" id="mlo:mll5702"/>
<dbReference type="PATRIC" id="fig|266835.9.peg.4534"/>
<dbReference type="eggNOG" id="COG3254">
    <property type="taxonomic scope" value="Bacteria"/>
</dbReference>
<dbReference type="HOGENOM" id="CLU_100689_2_0_5"/>
<dbReference type="UniPathway" id="UPA00125"/>
<dbReference type="Proteomes" id="UP000000552">
    <property type="component" value="Chromosome"/>
</dbReference>
<dbReference type="GO" id="GO:0005737">
    <property type="term" value="C:cytoplasm"/>
    <property type="evidence" value="ECO:0007669"/>
    <property type="project" value="UniProtKB-SubCell"/>
</dbReference>
<dbReference type="GO" id="GO:0062192">
    <property type="term" value="F:L-rhamnose mutarotase activity"/>
    <property type="evidence" value="ECO:0007669"/>
    <property type="project" value="UniProtKB-EC"/>
</dbReference>
<dbReference type="GO" id="GO:0019301">
    <property type="term" value="P:rhamnose catabolic process"/>
    <property type="evidence" value="ECO:0007669"/>
    <property type="project" value="TreeGrafter"/>
</dbReference>
<dbReference type="Gene3D" id="3.30.70.100">
    <property type="match status" value="1"/>
</dbReference>
<dbReference type="HAMAP" id="MF_01663">
    <property type="entry name" value="L_rham_rotase"/>
    <property type="match status" value="1"/>
</dbReference>
<dbReference type="InterPro" id="IPR011008">
    <property type="entry name" value="Dimeric_a/b-barrel"/>
</dbReference>
<dbReference type="InterPro" id="IPR013448">
    <property type="entry name" value="L-rhamnose_mutarotase"/>
</dbReference>
<dbReference type="InterPro" id="IPR008000">
    <property type="entry name" value="Rham/fucose_mutarotase"/>
</dbReference>
<dbReference type="NCBIfam" id="TIGR02625">
    <property type="entry name" value="YiiL_rotase"/>
    <property type="match status" value="1"/>
</dbReference>
<dbReference type="PANTHER" id="PTHR34389">
    <property type="entry name" value="L-RHAMNOSE MUTAROTASE"/>
    <property type="match status" value="1"/>
</dbReference>
<dbReference type="PANTHER" id="PTHR34389:SF2">
    <property type="entry name" value="L-RHAMNOSE MUTAROTASE"/>
    <property type="match status" value="1"/>
</dbReference>
<dbReference type="Pfam" id="PF05336">
    <property type="entry name" value="rhaM"/>
    <property type="match status" value="1"/>
</dbReference>
<dbReference type="SUPFAM" id="SSF54909">
    <property type="entry name" value="Dimeric alpha+beta barrel"/>
    <property type="match status" value="1"/>
</dbReference>
<organism>
    <name type="scientific">Mesorhizobium japonicum (strain LMG 29417 / CECT 9101 / MAFF 303099)</name>
    <name type="common">Mesorhizobium loti (strain MAFF 303099)</name>
    <dbReference type="NCBI Taxonomy" id="266835"/>
    <lineage>
        <taxon>Bacteria</taxon>
        <taxon>Pseudomonadati</taxon>
        <taxon>Pseudomonadota</taxon>
        <taxon>Alphaproteobacteria</taxon>
        <taxon>Hyphomicrobiales</taxon>
        <taxon>Phyllobacteriaceae</taxon>
        <taxon>Mesorhizobium</taxon>
    </lineage>
</organism>
<name>RHAM_RHILO</name>
<keyword id="KW-0119">Carbohydrate metabolism</keyword>
<keyword id="KW-0963">Cytoplasm</keyword>
<keyword id="KW-0413">Isomerase</keyword>
<keyword id="KW-0684">Rhamnose metabolism</keyword>
<accession>Q98B72</accession>